<organism>
    <name type="scientific">Oryza sativa subsp. japonica</name>
    <name type="common">Rice</name>
    <dbReference type="NCBI Taxonomy" id="39947"/>
    <lineage>
        <taxon>Eukaryota</taxon>
        <taxon>Viridiplantae</taxon>
        <taxon>Streptophyta</taxon>
        <taxon>Embryophyta</taxon>
        <taxon>Tracheophyta</taxon>
        <taxon>Spermatophyta</taxon>
        <taxon>Magnoliopsida</taxon>
        <taxon>Liliopsida</taxon>
        <taxon>Poales</taxon>
        <taxon>Poaceae</taxon>
        <taxon>BOP clade</taxon>
        <taxon>Oryzoideae</taxon>
        <taxon>Oryzeae</taxon>
        <taxon>Oryzinae</taxon>
        <taxon>Oryza</taxon>
        <taxon>Oryza sativa</taxon>
    </lineage>
</organism>
<name>CSTR4_ORYSJ</name>
<proteinExistence type="inferred from homology"/>
<reference key="1">
    <citation type="journal article" date="2002" name="Nature">
        <title>Sequence and analysis of rice chromosome 4.</title>
        <authorList>
            <person name="Feng Q."/>
            <person name="Zhang Y."/>
            <person name="Hao P."/>
            <person name="Wang S."/>
            <person name="Fu G."/>
            <person name="Huang Y."/>
            <person name="Li Y."/>
            <person name="Zhu J."/>
            <person name="Liu Y."/>
            <person name="Hu X."/>
            <person name="Jia P."/>
            <person name="Zhang Y."/>
            <person name="Zhao Q."/>
            <person name="Ying K."/>
            <person name="Yu S."/>
            <person name="Tang Y."/>
            <person name="Weng Q."/>
            <person name="Zhang L."/>
            <person name="Lu Y."/>
            <person name="Mu J."/>
            <person name="Lu Y."/>
            <person name="Zhang L.S."/>
            <person name="Yu Z."/>
            <person name="Fan D."/>
            <person name="Liu X."/>
            <person name="Lu T."/>
            <person name="Li C."/>
            <person name="Wu Y."/>
            <person name="Sun T."/>
            <person name="Lei H."/>
            <person name="Li T."/>
            <person name="Hu H."/>
            <person name="Guan J."/>
            <person name="Wu M."/>
            <person name="Zhang R."/>
            <person name="Zhou B."/>
            <person name="Chen Z."/>
            <person name="Chen L."/>
            <person name="Jin Z."/>
            <person name="Wang R."/>
            <person name="Yin H."/>
            <person name="Cai Z."/>
            <person name="Ren S."/>
            <person name="Lv G."/>
            <person name="Gu W."/>
            <person name="Zhu G."/>
            <person name="Tu Y."/>
            <person name="Jia J."/>
            <person name="Zhang Y."/>
            <person name="Chen J."/>
            <person name="Kang H."/>
            <person name="Chen X."/>
            <person name="Shao C."/>
            <person name="Sun Y."/>
            <person name="Hu Q."/>
            <person name="Zhang X."/>
            <person name="Zhang W."/>
            <person name="Wang L."/>
            <person name="Ding C."/>
            <person name="Sheng H."/>
            <person name="Gu J."/>
            <person name="Chen S."/>
            <person name="Ni L."/>
            <person name="Zhu F."/>
            <person name="Chen W."/>
            <person name="Lan L."/>
            <person name="Lai Y."/>
            <person name="Cheng Z."/>
            <person name="Gu M."/>
            <person name="Jiang J."/>
            <person name="Li J."/>
            <person name="Hong G."/>
            <person name="Xue Y."/>
            <person name="Han B."/>
        </authorList>
    </citation>
    <scope>NUCLEOTIDE SEQUENCE [LARGE SCALE GENOMIC DNA]</scope>
    <source>
        <strain>cv. Nipponbare</strain>
    </source>
</reference>
<reference key="2">
    <citation type="journal article" date="2005" name="Nature">
        <title>The map-based sequence of the rice genome.</title>
        <authorList>
            <consortium name="International rice genome sequencing project (IRGSP)"/>
        </authorList>
    </citation>
    <scope>NUCLEOTIDE SEQUENCE [LARGE SCALE GENOMIC DNA]</scope>
    <source>
        <strain>cv. Nipponbare</strain>
    </source>
</reference>
<reference key="3">
    <citation type="journal article" date="2013" name="Rice">
        <title>Improvement of the Oryza sativa Nipponbare reference genome using next generation sequence and optical map data.</title>
        <authorList>
            <person name="Kawahara Y."/>
            <person name="de la Bastide M."/>
            <person name="Hamilton J.P."/>
            <person name="Kanamori H."/>
            <person name="McCombie W.R."/>
            <person name="Ouyang S."/>
            <person name="Schwartz D.C."/>
            <person name="Tanaka T."/>
            <person name="Wu J."/>
            <person name="Zhou S."/>
            <person name="Childs K.L."/>
            <person name="Davidson R.M."/>
            <person name="Lin H."/>
            <person name="Quesada-Ocampo L."/>
            <person name="Vaillancourt B."/>
            <person name="Sakai H."/>
            <person name="Lee S.S."/>
            <person name="Kim J."/>
            <person name="Numa H."/>
            <person name="Itoh T."/>
            <person name="Buell C.R."/>
            <person name="Matsumoto T."/>
        </authorList>
    </citation>
    <scope>GENOME REANNOTATION</scope>
    <source>
        <strain>cv. Nipponbare</strain>
    </source>
</reference>
<dbReference type="EMBL" id="AL606613">
    <property type="protein sequence ID" value="CAE01663.2"/>
    <property type="molecule type" value="Genomic_DNA"/>
</dbReference>
<dbReference type="EMBL" id="AL731617">
    <property type="protein sequence ID" value="CAE02488.2"/>
    <property type="molecule type" value="Genomic_DNA"/>
</dbReference>
<dbReference type="EMBL" id="AP008210">
    <property type="status" value="NOT_ANNOTATED_CDS"/>
    <property type="molecule type" value="Genomic_DNA"/>
</dbReference>
<dbReference type="EMBL" id="AP014960">
    <property type="status" value="NOT_ANNOTATED_CDS"/>
    <property type="molecule type" value="Genomic_DNA"/>
</dbReference>
<dbReference type="RefSeq" id="XP_015636543.1">
    <property type="nucleotide sequence ID" value="XM_015781057.1"/>
</dbReference>
<dbReference type="SMR" id="Q7X7C4"/>
<dbReference type="FunCoup" id="Q7X7C4">
    <property type="interactions" value="19"/>
</dbReference>
<dbReference type="STRING" id="39947.Q7X7C4"/>
<dbReference type="PaxDb" id="39947-Q7X7C4"/>
<dbReference type="eggNOG" id="KOG2234">
    <property type="taxonomic scope" value="Eukaryota"/>
</dbReference>
<dbReference type="InParanoid" id="Q7X7C4"/>
<dbReference type="OrthoDB" id="419167at2759"/>
<dbReference type="Proteomes" id="UP000000763">
    <property type="component" value="Chromosome 4"/>
</dbReference>
<dbReference type="Proteomes" id="UP000059680">
    <property type="component" value="Chromosome 4"/>
</dbReference>
<dbReference type="GO" id="GO:0000139">
    <property type="term" value="C:Golgi membrane"/>
    <property type="evidence" value="ECO:0000318"/>
    <property type="project" value="GO_Central"/>
</dbReference>
<dbReference type="GO" id="GO:0015165">
    <property type="term" value="F:pyrimidine nucleotide-sugar transmembrane transporter activity"/>
    <property type="evidence" value="ECO:0007669"/>
    <property type="project" value="InterPro"/>
</dbReference>
<dbReference type="GO" id="GO:0022857">
    <property type="term" value="F:transmembrane transporter activity"/>
    <property type="evidence" value="ECO:0000318"/>
    <property type="project" value="GO_Central"/>
</dbReference>
<dbReference type="GO" id="GO:0055085">
    <property type="term" value="P:transmembrane transport"/>
    <property type="evidence" value="ECO:0000318"/>
    <property type="project" value="GO_Central"/>
</dbReference>
<dbReference type="InterPro" id="IPR007271">
    <property type="entry name" value="Nuc_sug_transpt"/>
</dbReference>
<dbReference type="PANTHER" id="PTHR10231">
    <property type="entry name" value="NUCLEOTIDE-SUGAR TRANSMEMBRANE TRANSPORTER"/>
    <property type="match status" value="1"/>
</dbReference>
<dbReference type="Pfam" id="PF04142">
    <property type="entry name" value="Nuc_sug_transp"/>
    <property type="match status" value="1"/>
</dbReference>
<dbReference type="PIRSF" id="PIRSF005799">
    <property type="entry name" value="UDP-gal_transpt"/>
    <property type="match status" value="1"/>
</dbReference>
<dbReference type="SUPFAM" id="SSF103481">
    <property type="entry name" value="Multidrug resistance efflux transporter EmrE"/>
    <property type="match status" value="1"/>
</dbReference>
<gene>
    <name evidence="3" type="primary">CSTLP4</name>
    <name evidence="3" type="ordered locus">LOC_Os04g41320</name>
    <name evidence="5" type="ORF">OSJNBa0076N16.10</name>
    <name evidence="4" type="ORF">OSJNBa0084K20.12</name>
</gene>
<sequence length="405" mass="44659">MQRNGVMECSVCHSKVVAPSPRSVSRAYDKHRSKISSKYRALNFLLVSGDCILVGLQPILVFMSKVDGKFQFSPISVNFLTEVTKVIFAIVMLIIQSRKQKVGEKPLLSLSTFVQAARNNALLAVPALLYAINNYLKFIMQLYFSPATVKMLSNLKVLVIAILLKFIMRRKFSIIQWEALALLLIGISVNQLSSIPDGTKSFGLAVTTIAYIYTLIFVTVPSLASVYNEYALKSQFDTSIYLQNLFLYGYGAIFNFLGILGTVIFQGPESFDILRGHSRATMFLICNNAAQGILSSFFFKYADTILKKYSSTVATIFTGLASAAFLGHTLTVNFLLGISIVFISMHQFFSPLAKVKDDKPAGALEPEDAQNHRSSDSSFVNMTAGAADDASHLTATDERKPLLPI</sequence>
<evidence type="ECO:0000250" key="1">
    <source>
        <dbReference type="UniProtKB" id="Q654D9"/>
    </source>
</evidence>
<evidence type="ECO:0000255" key="2"/>
<evidence type="ECO:0000305" key="3"/>
<evidence type="ECO:0000312" key="4">
    <source>
        <dbReference type="EMBL" id="CAE01663.2"/>
    </source>
</evidence>
<evidence type="ECO:0000312" key="5">
    <source>
        <dbReference type="EMBL" id="CAE02488.2"/>
    </source>
</evidence>
<keyword id="KW-0333">Golgi apparatus</keyword>
<keyword id="KW-0472">Membrane</keyword>
<keyword id="KW-1185">Reference proteome</keyword>
<keyword id="KW-0762">Sugar transport</keyword>
<keyword id="KW-0812">Transmembrane</keyword>
<keyword id="KW-1133">Transmembrane helix</keyword>
<keyword id="KW-0813">Transport</keyword>
<feature type="chain" id="PRO_0000434343" description="CMP-sialic acid transporter 4">
    <location>
        <begin position="1"/>
        <end position="405"/>
    </location>
</feature>
<feature type="topological domain" description="Cytoplasmic" evidence="3">
    <location>
        <begin position="1"/>
        <end position="43"/>
    </location>
</feature>
<feature type="transmembrane region" description="Helical" evidence="2">
    <location>
        <begin position="44"/>
        <end position="64"/>
    </location>
</feature>
<feature type="topological domain" description="Lumenal" evidence="3">
    <location>
        <begin position="65"/>
        <end position="74"/>
    </location>
</feature>
<feature type="transmembrane region" description="Helical" evidence="2">
    <location>
        <begin position="75"/>
        <end position="95"/>
    </location>
</feature>
<feature type="topological domain" description="Cytoplasmic" evidence="3">
    <location>
        <begin position="96"/>
        <end position="121"/>
    </location>
</feature>
<feature type="transmembrane region" description="Helical" evidence="2">
    <location>
        <begin position="122"/>
        <end position="142"/>
    </location>
</feature>
<feature type="topological domain" description="Lumenal" evidence="3">
    <location>
        <position position="143"/>
    </location>
</feature>
<feature type="transmembrane region" description="Helical" evidence="2">
    <location>
        <begin position="144"/>
        <end position="164"/>
    </location>
</feature>
<feature type="topological domain" description="Cytoplasmic" evidence="3">
    <location>
        <begin position="165"/>
        <end position="171"/>
    </location>
</feature>
<feature type="transmembrane region" description="Helical" evidence="2">
    <location>
        <begin position="172"/>
        <end position="192"/>
    </location>
</feature>
<feature type="topological domain" description="Lumenal" evidence="3">
    <location>
        <begin position="193"/>
        <end position="203"/>
    </location>
</feature>
<feature type="transmembrane region" description="Helical" evidence="2">
    <location>
        <begin position="204"/>
        <end position="224"/>
    </location>
</feature>
<feature type="topological domain" description="Cytoplasmic" evidence="3">
    <location>
        <begin position="225"/>
        <end position="244"/>
    </location>
</feature>
<feature type="transmembrane region" description="Helical" evidence="2">
    <location>
        <begin position="245"/>
        <end position="265"/>
    </location>
</feature>
<feature type="topological domain" description="Lumenal" evidence="3">
    <location>
        <begin position="266"/>
        <end position="281"/>
    </location>
</feature>
<feature type="transmembrane region" description="Helical" evidence="2">
    <location>
        <begin position="282"/>
        <end position="302"/>
    </location>
</feature>
<feature type="topological domain" description="Cytoplasmic" evidence="3">
    <location>
        <begin position="303"/>
        <end position="322"/>
    </location>
</feature>
<feature type="transmembrane region" description="Helical" evidence="2">
    <location>
        <begin position="323"/>
        <end position="343"/>
    </location>
</feature>
<feature type="topological domain" description="Lumenal" evidence="3">
    <location>
        <begin position="344"/>
        <end position="405"/>
    </location>
</feature>
<accession>Q7X7C4</accession>
<protein>
    <recommendedName>
        <fullName evidence="3">CMP-sialic acid transporter 4</fullName>
        <shortName evidence="3">CMP-SA-Tr 4</shortName>
        <shortName evidence="3">CMP-Sia-Tr 4</shortName>
    </recommendedName>
    <alternativeName>
        <fullName evidence="3">CMP-sialic acid transporter-like protein 4</fullName>
    </alternativeName>
</protein>
<comment type="function">
    <text evidence="1">Sugar transporter involved in the transport of CMP-sialic acid from the cytoplasm into the Golgi. May transport important nucleotide sugars such as CMP-Kdo (2-keto-3-deoxy-D-manno-octulosonic acid) in physiological conditions.</text>
</comment>
<comment type="subcellular location">
    <subcellularLocation>
        <location evidence="3">Golgi apparatus membrane</location>
        <topology evidence="3">Multi-pass membrane protein</topology>
    </subcellularLocation>
</comment>
<comment type="similarity">
    <text evidence="3">Belongs to the nucleotide-sugar transporter family. CMP-Sialate:CMP antiporter (TC 2.A.7.12) subfamily.</text>
</comment>